<evidence type="ECO:0000255" key="1">
    <source>
        <dbReference type="HAMAP-Rule" id="MF_00456"/>
    </source>
</evidence>
<comment type="function">
    <text evidence="1">Catalyzes the transfer of a phosphate group to glutamate to form L-glutamate 5-phosphate.</text>
</comment>
<comment type="catalytic activity">
    <reaction evidence="1">
        <text>L-glutamate + ATP = L-glutamyl 5-phosphate + ADP</text>
        <dbReference type="Rhea" id="RHEA:14877"/>
        <dbReference type="ChEBI" id="CHEBI:29985"/>
        <dbReference type="ChEBI" id="CHEBI:30616"/>
        <dbReference type="ChEBI" id="CHEBI:58274"/>
        <dbReference type="ChEBI" id="CHEBI:456216"/>
        <dbReference type="EC" id="2.7.2.11"/>
    </reaction>
</comment>
<comment type="pathway">
    <text evidence="1">Amino-acid biosynthesis; L-proline biosynthesis; L-glutamate 5-semialdehyde from L-glutamate: step 1/2.</text>
</comment>
<comment type="subcellular location">
    <subcellularLocation>
        <location evidence="1">Cytoplasm</location>
    </subcellularLocation>
</comment>
<comment type="similarity">
    <text evidence="1">Belongs to the glutamate 5-kinase family.</text>
</comment>
<feature type="chain" id="PRO_1000081055" description="Glutamate 5-kinase">
    <location>
        <begin position="1"/>
        <end position="368"/>
    </location>
</feature>
<feature type="domain" description="PUA" evidence="1">
    <location>
        <begin position="278"/>
        <end position="355"/>
    </location>
</feature>
<feature type="binding site" evidence="1">
    <location>
        <position position="13"/>
    </location>
    <ligand>
        <name>ATP</name>
        <dbReference type="ChEBI" id="CHEBI:30616"/>
    </ligand>
</feature>
<feature type="binding site" evidence="1">
    <location>
        <position position="54"/>
    </location>
    <ligand>
        <name>substrate</name>
    </ligand>
</feature>
<feature type="binding site" evidence="1">
    <location>
        <position position="141"/>
    </location>
    <ligand>
        <name>substrate</name>
    </ligand>
</feature>
<feature type="binding site" evidence="1">
    <location>
        <position position="153"/>
    </location>
    <ligand>
        <name>substrate</name>
    </ligand>
</feature>
<feature type="binding site" evidence="1">
    <location>
        <begin position="173"/>
        <end position="174"/>
    </location>
    <ligand>
        <name>ATP</name>
        <dbReference type="ChEBI" id="CHEBI:30616"/>
    </ligand>
</feature>
<protein>
    <recommendedName>
        <fullName evidence="1">Glutamate 5-kinase</fullName>
        <ecNumber evidence="1">2.7.2.11</ecNumber>
    </recommendedName>
    <alternativeName>
        <fullName evidence="1">Gamma-glutamyl kinase</fullName>
        <shortName evidence="1">GK</shortName>
    </alternativeName>
</protein>
<sequence length="368" mass="38544">MATLSAARCLVVKIGSALLVDQASGALRQDWLTGLAQDVAEIRARGADVILVSSGSIALGRRVLGLGTGALPLEQAQAAAAVGQIRLARAYEEVLAPHKITTAQVLVTLEDSTDRRRYLNTRATLGTLLSLGVTPIVNENDTIATDEIRYGDNDRLAAQVAVMAGADQLVLLSDVDGLYTANPATDPTATRFDRVDEITPEIEAMAGDAVSGLSKGGMKTKLMAARTAMDAGCAMAITEGARPRPLKALMDGAPATWFVPRTDPLAARKHWIAAMKPRGEITVDAGACAALKRGKSLLPAGITEVSGAFGRGDPVIILAPDGTALGRGLTRYTAVEARAIRGHRSAEIEAVLGYPGRAVLIHRDDMVL</sequence>
<name>PROB_DINSH</name>
<gene>
    <name evidence="1" type="primary">proB</name>
    <name type="ordered locus">Dshi_1467</name>
</gene>
<organism>
    <name type="scientific">Dinoroseobacter shibae (strain DSM 16493 / NCIMB 14021 / DFL 12)</name>
    <dbReference type="NCBI Taxonomy" id="398580"/>
    <lineage>
        <taxon>Bacteria</taxon>
        <taxon>Pseudomonadati</taxon>
        <taxon>Pseudomonadota</taxon>
        <taxon>Alphaproteobacteria</taxon>
        <taxon>Rhodobacterales</taxon>
        <taxon>Roseobacteraceae</taxon>
        <taxon>Dinoroseobacter</taxon>
    </lineage>
</organism>
<proteinExistence type="inferred from homology"/>
<reference key="1">
    <citation type="journal article" date="2010" name="ISME J.">
        <title>The complete genome sequence of the algal symbiont Dinoroseobacter shibae: a hitchhiker's guide to life in the sea.</title>
        <authorList>
            <person name="Wagner-Dobler I."/>
            <person name="Ballhausen B."/>
            <person name="Berger M."/>
            <person name="Brinkhoff T."/>
            <person name="Buchholz I."/>
            <person name="Bunk B."/>
            <person name="Cypionka H."/>
            <person name="Daniel R."/>
            <person name="Drepper T."/>
            <person name="Gerdts G."/>
            <person name="Hahnke S."/>
            <person name="Han C."/>
            <person name="Jahn D."/>
            <person name="Kalhoefer D."/>
            <person name="Kiss H."/>
            <person name="Klenk H.P."/>
            <person name="Kyrpides N."/>
            <person name="Liebl W."/>
            <person name="Liesegang H."/>
            <person name="Meincke L."/>
            <person name="Pati A."/>
            <person name="Petersen J."/>
            <person name="Piekarski T."/>
            <person name="Pommerenke C."/>
            <person name="Pradella S."/>
            <person name="Pukall R."/>
            <person name="Rabus R."/>
            <person name="Stackebrandt E."/>
            <person name="Thole S."/>
            <person name="Thompson L."/>
            <person name="Tielen P."/>
            <person name="Tomasch J."/>
            <person name="von Jan M."/>
            <person name="Wanphrut N."/>
            <person name="Wichels A."/>
            <person name="Zech H."/>
            <person name="Simon M."/>
        </authorList>
    </citation>
    <scope>NUCLEOTIDE SEQUENCE [LARGE SCALE GENOMIC DNA]</scope>
    <source>
        <strain>DSM 16493 / NCIMB 14021 / DFL 12</strain>
    </source>
</reference>
<keyword id="KW-0028">Amino-acid biosynthesis</keyword>
<keyword id="KW-0067">ATP-binding</keyword>
<keyword id="KW-0963">Cytoplasm</keyword>
<keyword id="KW-0418">Kinase</keyword>
<keyword id="KW-0547">Nucleotide-binding</keyword>
<keyword id="KW-0641">Proline biosynthesis</keyword>
<keyword id="KW-1185">Reference proteome</keyword>
<keyword id="KW-0808">Transferase</keyword>
<accession>A8LK10</accession>
<dbReference type="EC" id="2.7.2.11" evidence="1"/>
<dbReference type="EMBL" id="CP000830">
    <property type="protein sequence ID" value="ABV93209.1"/>
    <property type="molecule type" value="Genomic_DNA"/>
</dbReference>
<dbReference type="RefSeq" id="WP_012178139.1">
    <property type="nucleotide sequence ID" value="NC_009952.1"/>
</dbReference>
<dbReference type="SMR" id="A8LK10"/>
<dbReference type="STRING" id="398580.Dshi_1467"/>
<dbReference type="KEGG" id="dsh:Dshi_1467"/>
<dbReference type="eggNOG" id="COG0263">
    <property type="taxonomic scope" value="Bacteria"/>
</dbReference>
<dbReference type="HOGENOM" id="CLU_025400_2_0_5"/>
<dbReference type="OrthoDB" id="9804434at2"/>
<dbReference type="UniPathway" id="UPA00098">
    <property type="reaction ID" value="UER00359"/>
</dbReference>
<dbReference type="Proteomes" id="UP000006833">
    <property type="component" value="Chromosome"/>
</dbReference>
<dbReference type="GO" id="GO:0005829">
    <property type="term" value="C:cytosol"/>
    <property type="evidence" value="ECO:0007669"/>
    <property type="project" value="TreeGrafter"/>
</dbReference>
<dbReference type="GO" id="GO:0005524">
    <property type="term" value="F:ATP binding"/>
    <property type="evidence" value="ECO:0007669"/>
    <property type="project" value="UniProtKB-KW"/>
</dbReference>
<dbReference type="GO" id="GO:0004349">
    <property type="term" value="F:glutamate 5-kinase activity"/>
    <property type="evidence" value="ECO:0007669"/>
    <property type="project" value="UniProtKB-UniRule"/>
</dbReference>
<dbReference type="GO" id="GO:0003723">
    <property type="term" value="F:RNA binding"/>
    <property type="evidence" value="ECO:0007669"/>
    <property type="project" value="InterPro"/>
</dbReference>
<dbReference type="GO" id="GO:0055129">
    <property type="term" value="P:L-proline biosynthetic process"/>
    <property type="evidence" value="ECO:0007669"/>
    <property type="project" value="UniProtKB-UniRule"/>
</dbReference>
<dbReference type="CDD" id="cd04242">
    <property type="entry name" value="AAK_G5K_ProB"/>
    <property type="match status" value="1"/>
</dbReference>
<dbReference type="CDD" id="cd21157">
    <property type="entry name" value="PUA_G5K"/>
    <property type="match status" value="1"/>
</dbReference>
<dbReference type="FunFam" id="3.40.1160.10:FF:000018">
    <property type="entry name" value="Glutamate 5-kinase"/>
    <property type="match status" value="1"/>
</dbReference>
<dbReference type="Gene3D" id="3.40.1160.10">
    <property type="entry name" value="Acetylglutamate kinase-like"/>
    <property type="match status" value="2"/>
</dbReference>
<dbReference type="Gene3D" id="2.30.130.10">
    <property type="entry name" value="PUA domain"/>
    <property type="match status" value="1"/>
</dbReference>
<dbReference type="HAMAP" id="MF_00456">
    <property type="entry name" value="ProB"/>
    <property type="match status" value="1"/>
</dbReference>
<dbReference type="InterPro" id="IPR036393">
    <property type="entry name" value="AceGlu_kinase-like_sf"/>
</dbReference>
<dbReference type="InterPro" id="IPR001048">
    <property type="entry name" value="Asp/Glu/Uridylate_kinase"/>
</dbReference>
<dbReference type="InterPro" id="IPR041739">
    <property type="entry name" value="G5K_ProB"/>
</dbReference>
<dbReference type="InterPro" id="IPR001057">
    <property type="entry name" value="Glu/AcGlu_kinase"/>
</dbReference>
<dbReference type="InterPro" id="IPR011529">
    <property type="entry name" value="Glu_5kinase"/>
</dbReference>
<dbReference type="InterPro" id="IPR005715">
    <property type="entry name" value="Glu_5kinase/COase_Synthase"/>
</dbReference>
<dbReference type="InterPro" id="IPR019797">
    <property type="entry name" value="Glutamate_5-kinase_CS"/>
</dbReference>
<dbReference type="InterPro" id="IPR002478">
    <property type="entry name" value="PUA"/>
</dbReference>
<dbReference type="InterPro" id="IPR015947">
    <property type="entry name" value="PUA-like_sf"/>
</dbReference>
<dbReference type="InterPro" id="IPR036974">
    <property type="entry name" value="PUA_sf"/>
</dbReference>
<dbReference type="NCBIfam" id="TIGR01027">
    <property type="entry name" value="proB"/>
    <property type="match status" value="1"/>
</dbReference>
<dbReference type="PANTHER" id="PTHR43654">
    <property type="entry name" value="GLUTAMATE 5-KINASE"/>
    <property type="match status" value="1"/>
</dbReference>
<dbReference type="PANTHER" id="PTHR43654:SF1">
    <property type="entry name" value="ISOPENTENYL PHOSPHATE KINASE"/>
    <property type="match status" value="1"/>
</dbReference>
<dbReference type="Pfam" id="PF00696">
    <property type="entry name" value="AA_kinase"/>
    <property type="match status" value="1"/>
</dbReference>
<dbReference type="Pfam" id="PF01472">
    <property type="entry name" value="PUA"/>
    <property type="match status" value="1"/>
</dbReference>
<dbReference type="PIRSF" id="PIRSF000729">
    <property type="entry name" value="GK"/>
    <property type="match status" value="1"/>
</dbReference>
<dbReference type="PRINTS" id="PR00474">
    <property type="entry name" value="GLU5KINASE"/>
</dbReference>
<dbReference type="SMART" id="SM00359">
    <property type="entry name" value="PUA"/>
    <property type="match status" value="1"/>
</dbReference>
<dbReference type="SUPFAM" id="SSF53633">
    <property type="entry name" value="Carbamate kinase-like"/>
    <property type="match status" value="1"/>
</dbReference>
<dbReference type="SUPFAM" id="SSF88697">
    <property type="entry name" value="PUA domain-like"/>
    <property type="match status" value="1"/>
</dbReference>
<dbReference type="PROSITE" id="PS00902">
    <property type="entry name" value="GLUTAMATE_5_KINASE"/>
    <property type="match status" value="1"/>
</dbReference>
<dbReference type="PROSITE" id="PS50890">
    <property type="entry name" value="PUA"/>
    <property type="match status" value="1"/>
</dbReference>